<accession>Q6VMV9</accession>
<proteinExistence type="evidence at protein level"/>
<comment type="function">
    <text evidence="3">Flavonoid 3'-O-methyltransferase involved in the biosynthesis of polymethoxylated flavonoids natural products such as pebrellin, aroma compounds which contribute to the flavor of peppermint, and exhibit pharmacological activities such as anti-allergic, anti-oxidant, antibacterial, anti-proliferative, and anti-inflammatory effects (PubMed:14697269). Catalyzes S-adenosylmethionine-dependent regioselective 3'-O-methylation of flavonoids; active on various hydroxylated flavonoid substrates, including quercetin, rhamnetin, luteolin (LUT), 7,8,3'4'-tetrahydroxy-flavone and taxifolin, and, with a lower efficiency, eupatorin and hesperetin (PubMed:14697269).</text>
</comment>
<comment type="catalytic activity">
    <reaction evidence="3">
        <text>quercetin + S-adenosyl-L-methionine = isorhamnetin + S-adenosyl-L-homocysteine + H(+)</text>
        <dbReference type="Rhea" id="RHEA:60944"/>
        <dbReference type="ChEBI" id="CHEBI:15378"/>
        <dbReference type="ChEBI" id="CHEBI:57694"/>
        <dbReference type="ChEBI" id="CHEBI:57856"/>
        <dbReference type="ChEBI" id="CHEBI:59789"/>
        <dbReference type="ChEBI" id="CHEBI:144055"/>
    </reaction>
    <physiologicalReaction direction="left-to-right" evidence="3">
        <dbReference type="Rhea" id="RHEA:60945"/>
    </physiologicalReaction>
</comment>
<comment type="catalytic activity">
    <reaction evidence="3">
        <text>luteolin + S-adenosyl-L-methionine = chrysoeriol + S-adenosyl-L-homocysteine + H(+)</text>
        <dbReference type="Rhea" id="RHEA:14589"/>
        <dbReference type="ChEBI" id="CHEBI:15378"/>
        <dbReference type="ChEBI" id="CHEBI:57545"/>
        <dbReference type="ChEBI" id="CHEBI:57799"/>
        <dbReference type="ChEBI" id="CHEBI:57856"/>
        <dbReference type="ChEBI" id="CHEBI:59789"/>
    </reaction>
</comment>
<comment type="catalytic activity">
    <reaction evidence="3">
        <text>a 3'-hydroxyflavone + S-adenosyl-L-methionine = a 3'-methoxyflavone + S-adenosyl-L-homocysteine + H(+)</text>
        <dbReference type="Rhea" id="RHEA:55332"/>
        <dbReference type="ChEBI" id="CHEBI:15378"/>
        <dbReference type="ChEBI" id="CHEBI:27741"/>
        <dbReference type="ChEBI" id="CHEBI:57856"/>
        <dbReference type="ChEBI" id="CHEBI:59789"/>
        <dbReference type="ChEBI" id="CHEBI:138730"/>
        <dbReference type="EC" id="2.1.1.42"/>
    </reaction>
    <physiologicalReaction direction="left-to-right" evidence="3">
        <dbReference type="Rhea" id="RHEA:55333"/>
    </physiologicalReaction>
</comment>
<comment type="catalytic activity">
    <reaction evidence="3">
        <text>rhamnetin + S-adenosyl-L-methionine = rhamnacene + S-adenosyl-L-homocysteine + H(+)</text>
        <dbReference type="Rhea" id="RHEA:73271"/>
        <dbReference type="ChEBI" id="CHEBI:15378"/>
        <dbReference type="ChEBI" id="CHEBI:57856"/>
        <dbReference type="ChEBI" id="CHEBI:59789"/>
        <dbReference type="ChEBI" id="CHEBI:192706"/>
        <dbReference type="ChEBI" id="CHEBI:192768"/>
    </reaction>
    <physiologicalReaction direction="left-to-right" evidence="3">
        <dbReference type="Rhea" id="RHEA:73272"/>
    </physiologicalReaction>
</comment>
<comment type="catalytic activity">
    <reaction evidence="3">
        <text>3',4',7,8-tetrahydroxyflavone + S-adenosyl-L-methionine = 4',7,8-trihydroxy-3'-methoxyflavone-7-olate + S-adenosyl-L-homocysteine + H(+)</text>
        <dbReference type="Rhea" id="RHEA:73275"/>
        <dbReference type="ChEBI" id="CHEBI:15378"/>
        <dbReference type="ChEBI" id="CHEBI:57856"/>
        <dbReference type="ChEBI" id="CHEBI:59789"/>
        <dbReference type="ChEBI" id="CHEBI:192774"/>
        <dbReference type="ChEBI" id="CHEBI:192775"/>
    </reaction>
    <physiologicalReaction direction="left-to-right" evidence="3">
        <dbReference type="Rhea" id="RHEA:73276"/>
    </physiologicalReaction>
</comment>
<comment type="catalytic activity">
    <reaction evidence="3">
        <text>taxifolin + S-adenosyl-L-methionine = taxifolin 3'-methyl ether + S-adenosyl-L-homocysteine + H(+)</text>
        <dbReference type="Rhea" id="RHEA:74187"/>
        <dbReference type="ChEBI" id="CHEBI:15378"/>
        <dbReference type="ChEBI" id="CHEBI:38747"/>
        <dbReference type="ChEBI" id="CHEBI:57856"/>
        <dbReference type="ChEBI" id="CHEBI:59789"/>
        <dbReference type="ChEBI" id="CHEBI:175075"/>
    </reaction>
    <physiologicalReaction direction="left-to-right" evidence="3">
        <dbReference type="Rhea" id="RHEA:74188"/>
    </physiologicalReaction>
</comment>
<comment type="pathway">
    <text evidence="5">Flavonoid metabolism.</text>
</comment>
<comment type="subunit">
    <text evidence="1">Homodimer.</text>
</comment>
<comment type="similarity">
    <text evidence="2">Belongs to the class I-like SAM-binding methyltransferase superfamily. Cation-independent O-methyltransferase family.</text>
</comment>
<evidence type="ECO:0000250" key="1">
    <source>
        <dbReference type="UniProtKB" id="Q7XB10"/>
    </source>
</evidence>
<evidence type="ECO:0000255" key="2">
    <source>
        <dbReference type="PROSITE-ProRule" id="PRU01020"/>
    </source>
</evidence>
<evidence type="ECO:0000269" key="3">
    <source>
    </source>
</evidence>
<evidence type="ECO:0000303" key="4">
    <source>
    </source>
</evidence>
<evidence type="ECO:0000303" key="5">
    <source>
    </source>
</evidence>
<evidence type="ECO:0000305" key="6">
    <source>
    </source>
</evidence>
<keyword id="KW-0489">Methyltransferase</keyword>
<keyword id="KW-0949">S-adenosyl-L-methionine</keyword>
<keyword id="KW-0808">Transferase</keyword>
<gene>
    <name evidence="4" type="primary">OMT3</name>
</gene>
<feature type="chain" id="PRO_0000456912" description="Flavonoid 3'-O-methyltransferase 3">
    <location>
        <begin position="1"/>
        <end position="364"/>
    </location>
</feature>
<feature type="active site" description="Proton acceptor" evidence="2">
    <location>
        <position position="270"/>
    </location>
</feature>
<feature type="binding site" evidence="2">
    <location>
        <position position="232"/>
    </location>
    <ligand>
        <name>S-adenosyl-L-methionine</name>
        <dbReference type="ChEBI" id="CHEBI:59789"/>
    </ligand>
</feature>
<name>OMT3_MENPI</name>
<organism>
    <name type="scientific">Mentha piperita</name>
    <name type="common">Peppermint</name>
    <name type="synonym">Mentha aquatica x Mentha spicata</name>
    <dbReference type="NCBI Taxonomy" id="34256"/>
    <lineage>
        <taxon>Eukaryota</taxon>
        <taxon>Viridiplantae</taxon>
        <taxon>Streptophyta</taxon>
        <taxon>Embryophyta</taxon>
        <taxon>Tracheophyta</taxon>
        <taxon>Spermatophyta</taxon>
        <taxon>Magnoliopsida</taxon>
        <taxon>eudicotyledons</taxon>
        <taxon>Gunneridae</taxon>
        <taxon>Pentapetalae</taxon>
        <taxon>asterids</taxon>
        <taxon>lamiids</taxon>
        <taxon>Lamiales</taxon>
        <taxon>Lamiaceae</taxon>
        <taxon>Nepetoideae</taxon>
        <taxon>Mentheae</taxon>
        <taxon>Menthinae</taxon>
        <taxon>Mentha</taxon>
    </lineage>
</organism>
<protein>
    <recommendedName>
        <fullName evidence="4">Flavonoid 3'-O-methyltransferase 3</fullName>
        <shortName evidence="4">MpOMT3</shortName>
        <ecNumber evidence="2 3">2.1.1.42</ecNumber>
    </recommendedName>
    <alternativeName>
        <fullName evidence="6">7,8,3'4'-tetrahydroxy-flavone 3'-O-methyltransferase</fullName>
        <ecNumber evidence="3">2.1.1.-</ecNumber>
    </alternativeName>
    <alternativeName>
        <fullName evidence="6">Luteolin 3'-O-methyltransferase</fullName>
        <ecNumber evidence="3">2.1.1.-</ecNumber>
    </alternativeName>
    <alternativeName>
        <fullName evidence="6">Quercetin 3'-O-methyltransferase</fullName>
        <ecNumber evidence="3">2.1.1.-</ecNumber>
    </alternativeName>
    <alternativeName>
        <fullName evidence="6">Rhamnetin 3'-O-methyltransferase</fullName>
        <ecNumber evidence="3">2.1.1.-</ecNumber>
    </alternativeName>
    <alternativeName>
        <fullName evidence="6">Taxifolin 3'-O-methyltransferase</fullName>
        <ecNumber evidence="3">2.1.1.-</ecNumber>
    </alternativeName>
</protein>
<dbReference type="EC" id="2.1.1.42" evidence="2 3"/>
<dbReference type="EC" id="2.1.1.-" evidence="3"/>
<dbReference type="EMBL" id="AY337460">
    <property type="protein sequence ID" value="AAR09601.1"/>
    <property type="molecule type" value="mRNA"/>
</dbReference>
<dbReference type="SMR" id="Q6VMV9"/>
<dbReference type="GO" id="GO:0008171">
    <property type="term" value="F:O-methyltransferase activity"/>
    <property type="evidence" value="ECO:0007669"/>
    <property type="project" value="InterPro"/>
</dbReference>
<dbReference type="GO" id="GO:0046983">
    <property type="term" value="F:protein dimerization activity"/>
    <property type="evidence" value="ECO:0007669"/>
    <property type="project" value="InterPro"/>
</dbReference>
<dbReference type="GO" id="GO:0032259">
    <property type="term" value="P:methylation"/>
    <property type="evidence" value="ECO:0007669"/>
    <property type="project" value="UniProtKB-KW"/>
</dbReference>
<dbReference type="FunFam" id="1.10.10.10:FF:000357">
    <property type="entry name" value="Caffeic acid 3-O-methyltransferase"/>
    <property type="match status" value="1"/>
</dbReference>
<dbReference type="FunFam" id="3.40.50.150:FF:000061">
    <property type="entry name" value="Caffeic acid O-methyltransferase"/>
    <property type="match status" value="1"/>
</dbReference>
<dbReference type="Gene3D" id="3.40.50.150">
    <property type="entry name" value="Vaccinia Virus protein VP39"/>
    <property type="match status" value="1"/>
</dbReference>
<dbReference type="Gene3D" id="1.10.10.10">
    <property type="entry name" value="Winged helix-like DNA-binding domain superfamily/Winged helix DNA-binding domain"/>
    <property type="match status" value="1"/>
</dbReference>
<dbReference type="InterPro" id="IPR016461">
    <property type="entry name" value="COMT-like"/>
</dbReference>
<dbReference type="InterPro" id="IPR001077">
    <property type="entry name" value="O_MeTrfase_dom"/>
</dbReference>
<dbReference type="InterPro" id="IPR012967">
    <property type="entry name" value="Plant_O-MeTrfase_dimerisation"/>
</dbReference>
<dbReference type="InterPro" id="IPR029063">
    <property type="entry name" value="SAM-dependent_MTases_sf"/>
</dbReference>
<dbReference type="InterPro" id="IPR036388">
    <property type="entry name" value="WH-like_DNA-bd_sf"/>
</dbReference>
<dbReference type="InterPro" id="IPR036390">
    <property type="entry name" value="WH_DNA-bd_sf"/>
</dbReference>
<dbReference type="PANTHER" id="PTHR11746">
    <property type="entry name" value="O-METHYLTRANSFERASE"/>
    <property type="match status" value="1"/>
</dbReference>
<dbReference type="Pfam" id="PF08100">
    <property type="entry name" value="Dimerisation"/>
    <property type="match status" value="1"/>
</dbReference>
<dbReference type="Pfam" id="PF00891">
    <property type="entry name" value="Methyltransf_2"/>
    <property type="match status" value="1"/>
</dbReference>
<dbReference type="PIRSF" id="PIRSF005739">
    <property type="entry name" value="O-mtase"/>
    <property type="match status" value="1"/>
</dbReference>
<dbReference type="SUPFAM" id="SSF53335">
    <property type="entry name" value="S-adenosyl-L-methionine-dependent methyltransferases"/>
    <property type="match status" value="1"/>
</dbReference>
<dbReference type="SUPFAM" id="SSF46785">
    <property type="entry name" value="Winged helix' DNA-binding domain"/>
    <property type="match status" value="1"/>
</dbReference>
<dbReference type="PROSITE" id="PS51683">
    <property type="entry name" value="SAM_OMT_II"/>
    <property type="match status" value="1"/>
</dbReference>
<sequence length="364" mass="40263">MEASFENGRKRSSSSSSEEESAFSFAMELAAGSVLPMVIKSAIDLNLLELIKRGGEEGASAYELAAQINAENPKAAAEMIDRILQLLAAHSVLTCRVETPPSRRRRYSLAAVCKFLTRDEDGASLAPLSLLVQDRVFMEPWYHLKDVIVEGGVAFERAYGVHAFEYHAKDPKFNKIFNQAMHNQSIIFMKRILEIYKGFEGVKSLVDVGGGTGASSKMIVSKYPLIKAINFDLPHVIQDASPHPEVEHVGGDMFVSVPKADAIFLKWICHDWSDEHCRKLLKNCYDAILGNGKVIIAESTLPEDPNSGPDTIHAIRGDVIMLTVNPGGKERTEKEFRTLALQAGFKRLVKVCAAFHTCIMECHK</sequence>
<reference key="1">
    <citation type="journal article" date="2004" name="Phytochemistry">
        <title>Bio-fermentation of modified flavonoids: an example of in vivo diversification of secondary metabolites.</title>
        <authorList>
            <person name="Willits M.G."/>
            <person name="Giovanni M."/>
            <person name="Prata R.T.N."/>
            <person name="Kramer C.M."/>
            <person name="De Luca V."/>
            <person name="Steffens J.C."/>
            <person name="Graser G."/>
        </authorList>
    </citation>
    <scope>NUCLEOTIDE SEQUENCE [MRNA]</scope>
    <scope>FUNCTION</scope>
    <scope>CATALYTIC ACTIVITY</scope>
    <source>
        <tissue>Leaf</tissue>
    </source>
</reference>
<reference key="2">
    <citation type="journal article" date="2019" name="Nat. Prod. Rep.">
        <title>Non-volatile natural products in plant glandular trichomes: chemistry, biological activities and biosynthesis.</title>
        <authorList>
            <person name="Liu Y."/>
            <person name="Jing S.-X."/>
            <person name="Luo S.-H."/>
            <person name="Li S.-H."/>
        </authorList>
    </citation>
    <scope>PATHWAY</scope>
    <scope>REVIEW</scope>
</reference>